<protein>
    <recommendedName>
        <fullName evidence="1">Exodeoxyribonuclease 7 small subunit</fullName>
        <ecNumber evidence="1">3.1.11.6</ecNumber>
    </recommendedName>
    <alternativeName>
        <fullName evidence="1">Exodeoxyribonuclease VII small subunit</fullName>
        <shortName evidence="1">Exonuclease VII small subunit</shortName>
    </alternativeName>
</protein>
<comment type="function">
    <text evidence="1">Bidirectionally degrades single-stranded DNA into large acid-insoluble oligonucleotides, which are then degraded further into small acid-soluble oligonucleotides.</text>
</comment>
<comment type="catalytic activity">
    <reaction evidence="1">
        <text>Exonucleolytic cleavage in either 5'- to 3'- or 3'- to 5'-direction to yield nucleoside 5'-phosphates.</text>
        <dbReference type="EC" id="3.1.11.6"/>
    </reaction>
</comment>
<comment type="subunit">
    <text evidence="1">Heterooligomer composed of large and small subunits.</text>
</comment>
<comment type="subcellular location">
    <subcellularLocation>
        <location evidence="1">Cytoplasm</location>
    </subcellularLocation>
</comment>
<comment type="similarity">
    <text evidence="1">Belongs to the XseB family.</text>
</comment>
<organism>
    <name type="scientific">Pseudoalteromonas translucida (strain TAC 125)</name>
    <dbReference type="NCBI Taxonomy" id="326442"/>
    <lineage>
        <taxon>Bacteria</taxon>
        <taxon>Pseudomonadati</taxon>
        <taxon>Pseudomonadota</taxon>
        <taxon>Gammaproteobacteria</taxon>
        <taxon>Alteromonadales</taxon>
        <taxon>Pseudoalteromonadaceae</taxon>
        <taxon>Pseudoalteromonas</taxon>
    </lineage>
</organism>
<name>EX7S_PSET1</name>
<gene>
    <name evidence="1" type="primary">xseB</name>
    <name type="ordered locus">PSHAa2364</name>
</gene>
<reference key="1">
    <citation type="journal article" date="2005" name="Genome Res.">
        <title>Coping with cold: the genome of the versatile marine Antarctica bacterium Pseudoalteromonas haloplanktis TAC125.</title>
        <authorList>
            <person name="Medigue C."/>
            <person name="Krin E."/>
            <person name="Pascal G."/>
            <person name="Barbe V."/>
            <person name="Bernsel A."/>
            <person name="Bertin P.N."/>
            <person name="Cheung F."/>
            <person name="Cruveiller S."/>
            <person name="D'Amico S."/>
            <person name="Duilio A."/>
            <person name="Fang G."/>
            <person name="Feller G."/>
            <person name="Ho C."/>
            <person name="Mangenot S."/>
            <person name="Marino G."/>
            <person name="Nilsson J."/>
            <person name="Parrilli E."/>
            <person name="Rocha E.P.C."/>
            <person name="Rouy Z."/>
            <person name="Sekowska A."/>
            <person name="Tutino M.L."/>
            <person name="Vallenet D."/>
            <person name="von Heijne G."/>
            <person name="Danchin A."/>
        </authorList>
    </citation>
    <scope>NUCLEOTIDE SEQUENCE [LARGE SCALE GENOMIC DNA]</scope>
    <source>
        <strain>TAC 125</strain>
    </source>
</reference>
<dbReference type="EC" id="3.1.11.6" evidence="1"/>
<dbReference type="EMBL" id="CR954246">
    <property type="protein sequence ID" value="CAI87413.1"/>
    <property type="molecule type" value="Genomic_DNA"/>
</dbReference>
<dbReference type="SMR" id="Q3II11"/>
<dbReference type="STRING" id="326442.PSHAa2364"/>
<dbReference type="KEGG" id="pha:PSHAa2364"/>
<dbReference type="PATRIC" id="fig|326442.8.peg.2277"/>
<dbReference type="eggNOG" id="COG1722">
    <property type="taxonomic scope" value="Bacteria"/>
</dbReference>
<dbReference type="HOGENOM" id="CLU_145918_3_3_6"/>
<dbReference type="BioCyc" id="PHAL326442:PSHA_RS11645-MONOMER"/>
<dbReference type="Proteomes" id="UP000006843">
    <property type="component" value="Chromosome I"/>
</dbReference>
<dbReference type="GO" id="GO:0005829">
    <property type="term" value="C:cytosol"/>
    <property type="evidence" value="ECO:0007669"/>
    <property type="project" value="TreeGrafter"/>
</dbReference>
<dbReference type="GO" id="GO:0009318">
    <property type="term" value="C:exodeoxyribonuclease VII complex"/>
    <property type="evidence" value="ECO:0007669"/>
    <property type="project" value="InterPro"/>
</dbReference>
<dbReference type="GO" id="GO:0008855">
    <property type="term" value="F:exodeoxyribonuclease VII activity"/>
    <property type="evidence" value="ECO:0007669"/>
    <property type="project" value="UniProtKB-UniRule"/>
</dbReference>
<dbReference type="GO" id="GO:0006308">
    <property type="term" value="P:DNA catabolic process"/>
    <property type="evidence" value="ECO:0007669"/>
    <property type="project" value="UniProtKB-UniRule"/>
</dbReference>
<dbReference type="Gene3D" id="1.10.287.1040">
    <property type="entry name" value="Exonuclease VII, small subunit"/>
    <property type="match status" value="1"/>
</dbReference>
<dbReference type="HAMAP" id="MF_00337">
    <property type="entry name" value="Exonuc_7_S"/>
    <property type="match status" value="1"/>
</dbReference>
<dbReference type="InterPro" id="IPR003761">
    <property type="entry name" value="Exonuc_VII_S"/>
</dbReference>
<dbReference type="InterPro" id="IPR037004">
    <property type="entry name" value="Exonuc_VII_ssu_sf"/>
</dbReference>
<dbReference type="NCBIfam" id="NF002140">
    <property type="entry name" value="PRK00977.1-4"/>
    <property type="match status" value="1"/>
</dbReference>
<dbReference type="NCBIfam" id="TIGR01280">
    <property type="entry name" value="xseB"/>
    <property type="match status" value="1"/>
</dbReference>
<dbReference type="PANTHER" id="PTHR34137">
    <property type="entry name" value="EXODEOXYRIBONUCLEASE 7 SMALL SUBUNIT"/>
    <property type="match status" value="1"/>
</dbReference>
<dbReference type="PANTHER" id="PTHR34137:SF1">
    <property type="entry name" value="EXODEOXYRIBONUCLEASE 7 SMALL SUBUNIT"/>
    <property type="match status" value="1"/>
</dbReference>
<dbReference type="Pfam" id="PF02609">
    <property type="entry name" value="Exonuc_VII_S"/>
    <property type="match status" value="1"/>
</dbReference>
<dbReference type="PIRSF" id="PIRSF006488">
    <property type="entry name" value="Exonuc_VII_S"/>
    <property type="match status" value="1"/>
</dbReference>
<dbReference type="SUPFAM" id="SSF116842">
    <property type="entry name" value="XseB-like"/>
    <property type="match status" value="1"/>
</dbReference>
<proteinExistence type="inferred from homology"/>
<keyword id="KW-0963">Cytoplasm</keyword>
<keyword id="KW-0269">Exonuclease</keyword>
<keyword id="KW-0378">Hydrolase</keyword>
<keyword id="KW-0540">Nuclease</keyword>
<keyword id="KW-1185">Reference proteome</keyword>
<sequence>MATKKPENLSFEQALEELTTIVSEMEQGDLSLEQSLKQFERGIALAGASSSKLQQAEQKVAILMGKDEKSVLTDFDNDME</sequence>
<feature type="chain" id="PRO_0000303733" description="Exodeoxyribonuclease 7 small subunit">
    <location>
        <begin position="1"/>
        <end position="80"/>
    </location>
</feature>
<evidence type="ECO:0000255" key="1">
    <source>
        <dbReference type="HAMAP-Rule" id="MF_00337"/>
    </source>
</evidence>
<accession>Q3II11</accession>